<sequence length="74" mass="8208">MSKKEMILSWKNPMYRTESSYHPAGNILKELQEEEQHSIAGGTITLSTCAILSKPLGNNGYLCTVTKECMPSCN</sequence>
<protein>
    <recommendedName>
        <fullName evidence="3">Lantibiotic lichenicidin VK21 A1</fullName>
        <shortName evidence="3">LchA1</shortName>
    </recommendedName>
</protein>
<dbReference type="EMBL" id="GU949560">
    <property type="protein sequence ID" value="ADM36018.1"/>
    <property type="molecule type" value="Genomic_DNA"/>
</dbReference>
<dbReference type="RefSeq" id="WP_003186381.1">
    <property type="nucleotide sequence ID" value="NZ_BEXU01000002.1"/>
</dbReference>
<dbReference type="PDB" id="8C5J">
    <property type="method" value="NMR"/>
    <property type="chains" value="A=44-74"/>
</dbReference>
<dbReference type="PDBsum" id="8C5J"/>
<dbReference type="SMR" id="P86475"/>
<dbReference type="GeneID" id="92859301"/>
<dbReference type="PATRIC" id="fig|1402.62.peg.575"/>
<dbReference type="OMA" id="ECMPSCN"/>
<dbReference type="GO" id="GO:0005615">
    <property type="term" value="C:extracellular space"/>
    <property type="evidence" value="ECO:0000314"/>
    <property type="project" value="UniProtKB"/>
</dbReference>
<dbReference type="GO" id="GO:0005102">
    <property type="term" value="F:signaling receptor binding"/>
    <property type="evidence" value="ECO:0007669"/>
    <property type="project" value="UniProtKB-KW"/>
</dbReference>
<dbReference type="GO" id="GO:0050830">
    <property type="term" value="P:defense response to Gram-positive bacterium"/>
    <property type="evidence" value="ECO:0000314"/>
    <property type="project" value="UniProtKB"/>
</dbReference>
<dbReference type="GO" id="GO:0031640">
    <property type="term" value="P:killing of cells of another organism"/>
    <property type="evidence" value="ECO:0007669"/>
    <property type="project" value="UniProtKB-KW"/>
</dbReference>
<dbReference type="InterPro" id="IPR029243">
    <property type="entry name" value="Lantibiotic_alpha"/>
</dbReference>
<dbReference type="NCBIfam" id="NF000539">
    <property type="entry name" value="plantaricin"/>
    <property type="match status" value="1"/>
</dbReference>
<dbReference type="Pfam" id="PF14867">
    <property type="entry name" value="Lantibiotic_a"/>
    <property type="match status" value="1"/>
</dbReference>
<proteinExistence type="evidence at protein level"/>
<evidence type="ECO:0000250" key="1">
    <source>
        <dbReference type="UniProtKB" id="O87236"/>
    </source>
</evidence>
<evidence type="ECO:0000269" key="2">
    <source>
    </source>
</evidence>
<evidence type="ECO:0000303" key="3">
    <source>
    </source>
</evidence>
<evidence type="ECO:0000305" key="4"/>
<evidence type="ECO:0007829" key="5">
    <source>
        <dbReference type="PDB" id="8C5J"/>
    </source>
</evidence>
<feature type="propeptide" id="PRO_0000399042" evidence="2">
    <location>
        <begin position="1"/>
        <end position="42"/>
    </location>
</feature>
<feature type="peptide" id="PRO_0000399043" description="Lantibiotic lichenicidin VK21 A1" evidence="2">
    <location>
        <begin position="43"/>
        <end position="74"/>
    </location>
</feature>
<feature type="modified residue" description="2-oxobutanoic acid" evidence="2">
    <location>
        <position position="43"/>
    </location>
</feature>
<feature type="modified residue" description="2,3-didehydroalanine (Ser)" evidence="2">
    <location>
        <position position="47"/>
    </location>
</feature>
<feature type="modified residue" description="(Z)-2,3-didehydrobutyrine" evidence="2">
    <location>
        <position position="48"/>
    </location>
</feature>
<feature type="cross-link" description="Beta-methyllanthionine (Thr-Cys)" evidence="2">
    <location>
        <begin position="45"/>
        <end position="49"/>
    </location>
</feature>
<feature type="cross-link" description="Lanthionine (Ser-Cys)" evidence="2">
    <location>
        <begin position="53"/>
        <end position="63"/>
    </location>
</feature>
<feature type="cross-link" description="Beta-methyllanthionine (Thr-Cys)" evidence="2">
    <location>
        <begin position="64"/>
        <end position="69"/>
    </location>
</feature>
<feature type="cross-link" description="Beta-methyllanthionine (Thr-Cys)" evidence="2">
    <location>
        <begin position="66"/>
        <end position="73"/>
    </location>
</feature>
<feature type="helix" evidence="5">
    <location>
        <begin position="66"/>
        <end position="69"/>
    </location>
</feature>
<comment type="function">
    <text evidence="2">Lanthionine-containing peptide antibiotic (lantibiotic) active on Gram-positive bacteria. The bactericidal activity of lantibiotics is based on depolarization of energized bacterial cytoplasmic membranes, initiated by the formation of aqueous transmembrane pores. When present individually, LchA1 exhibits activity towards B.subtilis L1 (IC(50)=9 uM), Rhodococcus sp. SS2 (IC(50)=9 uM), M.luteus B1314 (IC(50)=1.2 uM), B.megaterium VKM41 (IC(50)=1.8 uM), S.aureus 209p (IC(50)=3.1 uM), B.pumilus 2001, B.globigii I, B.amyloliquefaciens I, M.smegmatis 1171 and M.phlei 1291. However, when combined with LchA2, it displays much stronger activity against B.subtilis L1 (IC(50)=0.64 uM), Rhodococcus sp. SS2 (IC(50)=0.64 uM), M.luteus B1314 (IC(50)=0.09 uM), B.megaterium VKM41 (IC(50)=0.12 uM) and S.aureus 209p (IC(50)=0.64 uM). The activity of the combined LchA1 and LchA2 peptides is strongest at a molar ratio of 1. Even when applied at 17-fold concentration of the highest IC(50) values for Gram-positive bacteria, neither the individual nor the combined peptides display activity against Gram-negative bacteria P.aeruginosa PAO1, P.putida I-97 or E.coli C600.</text>
</comment>
<comment type="subcellular location">
    <subcellularLocation>
        <location evidence="2 4">Secreted</location>
    </subcellularLocation>
</comment>
<comment type="PTM">
    <text evidence="1 2">Maturation of lantibiotics involves the enzymatic conversion of Thr, and Ser into dehydrated AA and the formation of thioether bonds with cysteine. This is followed by membrane translocation and cleavage of the modified precursor.</text>
</comment>
<comment type="PTM">
    <text evidence="2">The 2,3-didehydrobutyrine is determined to be the Z-isomer.</text>
</comment>
<comment type="mass spectrometry" mass="3249.51" method="Electrospray" evidence="2"/>
<reference evidence="4" key="1">
    <citation type="journal article" date="2010" name="Biochemistry">
        <title>Isolation, structure elucidation, and synergistic antibacterial activity of a novel two-component lantibiotic Lichenicidin from Bacillus licheniformis VK21.</title>
        <authorList>
            <person name="Shenkarev Z.O."/>
            <person name="Finkina E.I."/>
            <person name="Nurmukhamedova E.K."/>
            <person name="Balandin S.V."/>
            <person name="Mineev K.S."/>
            <person name="Nadezhdin K.D."/>
            <person name="Yakimenko Z.A."/>
            <person name="Tagaev A.A."/>
            <person name="Temirov Y.V."/>
            <person name="Arseniev A.S."/>
            <person name="Ovchinnikova T.V."/>
        </authorList>
    </citation>
    <scope>NUCLEOTIDE SEQUENCE [GENOMIC DNA]</scope>
    <scope>PROTEIN SEQUENCE OF 43-74</scope>
    <scope>FUNCTION</scope>
    <scope>MASS SPECTROMETRY</scope>
    <scope>STRUCTURE BY NMR OF 43-74</scope>
    <scope>OXOBUTANOIC ACID FORMATION AT THR-43</scope>
    <scope>DEHYDRATION AT SER-47 AND THR-48</scope>
    <scope>LANTHIONINE CROSS-LINKS</scope>
    <source>
        <strain evidence="2">VK21</strain>
    </source>
</reference>
<gene>
    <name evidence="3" type="primary">lchA1</name>
</gene>
<accession>P86475</accession>
<accession>E0YCK1</accession>
<name>LANLA_BACLI</name>
<organism>
    <name type="scientific">Bacillus licheniformis</name>
    <dbReference type="NCBI Taxonomy" id="1402"/>
    <lineage>
        <taxon>Bacteria</taxon>
        <taxon>Bacillati</taxon>
        <taxon>Bacillota</taxon>
        <taxon>Bacilli</taxon>
        <taxon>Bacillales</taxon>
        <taxon>Bacillaceae</taxon>
        <taxon>Bacillus</taxon>
    </lineage>
</organism>
<keyword id="KW-0002">3D-structure</keyword>
<keyword id="KW-0044">Antibiotic</keyword>
<keyword id="KW-0929">Antimicrobial</keyword>
<keyword id="KW-0078">Bacteriocin</keyword>
<keyword id="KW-0903">Direct protein sequencing</keyword>
<keyword id="KW-0425">Lantibiotic</keyword>
<keyword id="KW-0964">Secreted</keyword>
<keyword id="KW-0883">Thioether bond</keyword>